<dbReference type="EC" id="6.1.1.3" evidence="1"/>
<dbReference type="EMBL" id="CP000348">
    <property type="protein sequence ID" value="ABJ79528.1"/>
    <property type="molecule type" value="Genomic_DNA"/>
</dbReference>
<dbReference type="RefSeq" id="WP_011670572.1">
    <property type="nucleotide sequence ID" value="NC_008508.1"/>
</dbReference>
<dbReference type="SMR" id="Q04ZG7"/>
<dbReference type="KEGG" id="lbl:LBL_2115"/>
<dbReference type="HOGENOM" id="CLU_008554_0_1_12"/>
<dbReference type="GO" id="GO:0005737">
    <property type="term" value="C:cytoplasm"/>
    <property type="evidence" value="ECO:0007669"/>
    <property type="project" value="UniProtKB-SubCell"/>
</dbReference>
<dbReference type="GO" id="GO:0005524">
    <property type="term" value="F:ATP binding"/>
    <property type="evidence" value="ECO:0007669"/>
    <property type="project" value="UniProtKB-UniRule"/>
</dbReference>
<dbReference type="GO" id="GO:0046872">
    <property type="term" value="F:metal ion binding"/>
    <property type="evidence" value="ECO:0007669"/>
    <property type="project" value="UniProtKB-KW"/>
</dbReference>
<dbReference type="GO" id="GO:0004829">
    <property type="term" value="F:threonine-tRNA ligase activity"/>
    <property type="evidence" value="ECO:0007669"/>
    <property type="project" value="UniProtKB-UniRule"/>
</dbReference>
<dbReference type="GO" id="GO:0000049">
    <property type="term" value="F:tRNA binding"/>
    <property type="evidence" value="ECO:0007669"/>
    <property type="project" value="UniProtKB-KW"/>
</dbReference>
<dbReference type="GO" id="GO:0006435">
    <property type="term" value="P:threonyl-tRNA aminoacylation"/>
    <property type="evidence" value="ECO:0007669"/>
    <property type="project" value="UniProtKB-UniRule"/>
</dbReference>
<dbReference type="CDD" id="cd01667">
    <property type="entry name" value="TGS_ThrRS"/>
    <property type="match status" value="1"/>
</dbReference>
<dbReference type="CDD" id="cd00860">
    <property type="entry name" value="ThrRS_anticodon"/>
    <property type="match status" value="1"/>
</dbReference>
<dbReference type="CDD" id="cd00771">
    <property type="entry name" value="ThrRS_core"/>
    <property type="match status" value="1"/>
</dbReference>
<dbReference type="FunFam" id="3.30.54.20:FF:000002">
    <property type="entry name" value="Threonine--tRNA ligase"/>
    <property type="match status" value="1"/>
</dbReference>
<dbReference type="FunFam" id="3.30.930.10:FF:000019">
    <property type="entry name" value="Threonine--tRNA ligase"/>
    <property type="match status" value="1"/>
</dbReference>
<dbReference type="FunFam" id="3.40.50.800:FF:000001">
    <property type="entry name" value="Threonine--tRNA ligase"/>
    <property type="match status" value="1"/>
</dbReference>
<dbReference type="FunFam" id="3.30.980.10:FF:000005">
    <property type="entry name" value="Threonyl-tRNA synthetase, mitochondrial"/>
    <property type="match status" value="1"/>
</dbReference>
<dbReference type="Gene3D" id="3.10.20.30">
    <property type="match status" value="1"/>
</dbReference>
<dbReference type="Gene3D" id="3.30.54.20">
    <property type="match status" value="1"/>
</dbReference>
<dbReference type="Gene3D" id="3.40.50.800">
    <property type="entry name" value="Anticodon-binding domain"/>
    <property type="match status" value="1"/>
</dbReference>
<dbReference type="Gene3D" id="3.30.930.10">
    <property type="entry name" value="Bira Bifunctional Protein, Domain 2"/>
    <property type="match status" value="1"/>
</dbReference>
<dbReference type="Gene3D" id="3.30.980.10">
    <property type="entry name" value="Threonyl-trna Synthetase, Chain A, domain 2"/>
    <property type="match status" value="1"/>
</dbReference>
<dbReference type="HAMAP" id="MF_00184">
    <property type="entry name" value="Thr_tRNA_synth"/>
    <property type="match status" value="1"/>
</dbReference>
<dbReference type="InterPro" id="IPR002314">
    <property type="entry name" value="aa-tRNA-synt_IIb"/>
</dbReference>
<dbReference type="InterPro" id="IPR006195">
    <property type="entry name" value="aa-tRNA-synth_II"/>
</dbReference>
<dbReference type="InterPro" id="IPR045864">
    <property type="entry name" value="aa-tRNA-synth_II/BPL/LPL"/>
</dbReference>
<dbReference type="InterPro" id="IPR004154">
    <property type="entry name" value="Anticodon-bd"/>
</dbReference>
<dbReference type="InterPro" id="IPR036621">
    <property type="entry name" value="Anticodon-bd_dom_sf"/>
</dbReference>
<dbReference type="InterPro" id="IPR012675">
    <property type="entry name" value="Beta-grasp_dom_sf"/>
</dbReference>
<dbReference type="InterPro" id="IPR004095">
    <property type="entry name" value="TGS"/>
</dbReference>
<dbReference type="InterPro" id="IPR012676">
    <property type="entry name" value="TGS-like"/>
</dbReference>
<dbReference type="InterPro" id="IPR002320">
    <property type="entry name" value="Thr-tRNA-ligase_IIa"/>
</dbReference>
<dbReference type="InterPro" id="IPR018163">
    <property type="entry name" value="Thr/Ala-tRNA-synth_IIc_edit"/>
</dbReference>
<dbReference type="InterPro" id="IPR047246">
    <property type="entry name" value="ThrRS_anticodon"/>
</dbReference>
<dbReference type="InterPro" id="IPR033728">
    <property type="entry name" value="ThrRS_core"/>
</dbReference>
<dbReference type="InterPro" id="IPR012947">
    <property type="entry name" value="tRNA_SAD"/>
</dbReference>
<dbReference type="NCBIfam" id="TIGR00418">
    <property type="entry name" value="thrS"/>
    <property type="match status" value="1"/>
</dbReference>
<dbReference type="PANTHER" id="PTHR11451:SF44">
    <property type="entry name" value="THREONINE--TRNA LIGASE, CHLOROPLASTIC_MITOCHONDRIAL 2"/>
    <property type="match status" value="1"/>
</dbReference>
<dbReference type="PANTHER" id="PTHR11451">
    <property type="entry name" value="THREONINE-TRNA LIGASE"/>
    <property type="match status" value="1"/>
</dbReference>
<dbReference type="Pfam" id="PF03129">
    <property type="entry name" value="HGTP_anticodon"/>
    <property type="match status" value="1"/>
</dbReference>
<dbReference type="Pfam" id="PF00587">
    <property type="entry name" value="tRNA-synt_2b"/>
    <property type="match status" value="1"/>
</dbReference>
<dbReference type="Pfam" id="PF07973">
    <property type="entry name" value="tRNA_SAD"/>
    <property type="match status" value="1"/>
</dbReference>
<dbReference type="PRINTS" id="PR01047">
    <property type="entry name" value="TRNASYNTHTHR"/>
</dbReference>
<dbReference type="SMART" id="SM00863">
    <property type="entry name" value="tRNA_SAD"/>
    <property type="match status" value="1"/>
</dbReference>
<dbReference type="SUPFAM" id="SSF52954">
    <property type="entry name" value="Class II aaRS ABD-related"/>
    <property type="match status" value="1"/>
</dbReference>
<dbReference type="SUPFAM" id="SSF55681">
    <property type="entry name" value="Class II aaRS and biotin synthetases"/>
    <property type="match status" value="1"/>
</dbReference>
<dbReference type="SUPFAM" id="SSF81271">
    <property type="entry name" value="TGS-like"/>
    <property type="match status" value="1"/>
</dbReference>
<dbReference type="SUPFAM" id="SSF55186">
    <property type="entry name" value="ThrRS/AlaRS common domain"/>
    <property type="match status" value="1"/>
</dbReference>
<dbReference type="PROSITE" id="PS50862">
    <property type="entry name" value="AA_TRNA_LIGASE_II"/>
    <property type="match status" value="1"/>
</dbReference>
<dbReference type="PROSITE" id="PS51880">
    <property type="entry name" value="TGS"/>
    <property type="match status" value="1"/>
</dbReference>
<organism>
    <name type="scientific">Leptospira borgpetersenii serovar Hardjo-bovis (strain L550)</name>
    <dbReference type="NCBI Taxonomy" id="355276"/>
    <lineage>
        <taxon>Bacteria</taxon>
        <taxon>Pseudomonadati</taxon>
        <taxon>Spirochaetota</taxon>
        <taxon>Spirochaetia</taxon>
        <taxon>Leptospirales</taxon>
        <taxon>Leptospiraceae</taxon>
        <taxon>Leptospira</taxon>
    </lineage>
</organism>
<accession>Q04ZG7</accession>
<name>SYT_LEPBL</name>
<comment type="function">
    <text evidence="1">Catalyzes the attachment of threonine to tRNA(Thr) in a two-step reaction: L-threonine is first activated by ATP to form Thr-AMP and then transferred to the acceptor end of tRNA(Thr). Also edits incorrectly charged L-seryl-tRNA(Thr).</text>
</comment>
<comment type="catalytic activity">
    <reaction evidence="1">
        <text>tRNA(Thr) + L-threonine + ATP = L-threonyl-tRNA(Thr) + AMP + diphosphate + H(+)</text>
        <dbReference type="Rhea" id="RHEA:24624"/>
        <dbReference type="Rhea" id="RHEA-COMP:9670"/>
        <dbReference type="Rhea" id="RHEA-COMP:9704"/>
        <dbReference type="ChEBI" id="CHEBI:15378"/>
        <dbReference type="ChEBI" id="CHEBI:30616"/>
        <dbReference type="ChEBI" id="CHEBI:33019"/>
        <dbReference type="ChEBI" id="CHEBI:57926"/>
        <dbReference type="ChEBI" id="CHEBI:78442"/>
        <dbReference type="ChEBI" id="CHEBI:78534"/>
        <dbReference type="ChEBI" id="CHEBI:456215"/>
        <dbReference type="EC" id="6.1.1.3"/>
    </reaction>
</comment>
<comment type="cofactor">
    <cofactor evidence="1">
        <name>Zn(2+)</name>
        <dbReference type="ChEBI" id="CHEBI:29105"/>
    </cofactor>
    <text evidence="1">Binds 1 zinc ion per subunit.</text>
</comment>
<comment type="subunit">
    <text evidence="1">Homodimer.</text>
</comment>
<comment type="subcellular location">
    <subcellularLocation>
        <location evidence="1">Cytoplasm</location>
    </subcellularLocation>
</comment>
<comment type="similarity">
    <text evidence="1">Belongs to the class-II aminoacyl-tRNA synthetase family.</text>
</comment>
<feature type="chain" id="PRO_1000020417" description="Threonine--tRNA ligase">
    <location>
        <begin position="1"/>
        <end position="639"/>
    </location>
</feature>
<feature type="domain" description="TGS" evidence="2">
    <location>
        <begin position="1"/>
        <end position="62"/>
    </location>
</feature>
<feature type="region of interest" description="Catalytic" evidence="1">
    <location>
        <begin position="246"/>
        <end position="537"/>
    </location>
</feature>
<feature type="binding site" evidence="1">
    <location>
        <position position="337"/>
    </location>
    <ligand>
        <name>Zn(2+)</name>
        <dbReference type="ChEBI" id="CHEBI:29105"/>
    </ligand>
</feature>
<feature type="binding site" evidence="1">
    <location>
        <position position="388"/>
    </location>
    <ligand>
        <name>Zn(2+)</name>
        <dbReference type="ChEBI" id="CHEBI:29105"/>
    </ligand>
</feature>
<feature type="binding site" evidence="1">
    <location>
        <position position="514"/>
    </location>
    <ligand>
        <name>Zn(2+)</name>
        <dbReference type="ChEBI" id="CHEBI:29105"/>
    </ligand>
</feature>
<sequence>MYQLTLPDKSVKKVALGSTYRDFIEKELPFLKNKALAVRLNGKDIQDLSRVVETDANIEVLTYTEKAGWETFQHSAAHLLGMAVQNLYKNANLTVGPVIENGPGFFYYDIDFQGTIITPEDFPKIEAEMERIVKADYTVWRKVVPKKEAIETFQKLGEKYKIEIIGGILSEEVSIYGMGEWFDLCRGPHVSNSGILKSFKLTAISGAYWKADKDNAMLTRIYGVAFPSKKELDQYLFQIEEAKKRDHRKIGKELDLFSFQKEGPGFPFWHPKGTILWNSLADYLRAECNKRGYQEIKTPAVLSSELWKKSGHWDNFHENMYFTDIDEEDYALKPMNCPGCSLIYKHHLHSYRELPLRFAEFGSVHRHELHGVLHGLFRVRAFTQDDSHIYAPLEHLESEVTDIIDFTFTVYKKFGFSEFKTFIATRPEKSQGRDEDWEFATNTLKQSLEKKGIPYGIKEGEGAFYGPKIEFNIKDSIGRLWQCGTIQVDFSMPERFELDYTDSDGQKKRPVMIHRAIYGSLERFIGILIEHYEGKFPLWISPNQIRILTITEKVAEYAKDVYCELVDAGFRVELDTRNEKIGAKIRDSILKKANYLLILGEKEMESGTLAVRKRGQEDTKTLTRSGFISNLQDEIKSAG</sequence>
<protein>
    <recommendedName>
        <fullName evidence="1">Threonine--tRNA ligase</fullName>
        <ecNumber evidence="1">6.1.1.3</ecNumber>
    </recommendedName>
    <alternativeName>
        <fullName evidence="1">Threonyl-tRNA synthetase</fullName>
        <shortName evidence="1">ThrRS</shortName>
    </alternativeName>
</protein>
<gene>
    <name evidence="1" type="primary">thrS</name>
    <name type="ordered locus">LBL_2115</name>
</gene>
<proteinExistence type="inferred from homology"/>
<reference key="1">
    <citation type="journal article" date="2006" name="Proc. Natl. Acad. Sci. U.S.A.">
        <title>Genome reduction in Leptospira borgpetersenii reflects limited transmission potential.</title>
        <authorList>
            <person name="Bulach D.M."/>
            <person name="Zuerner R.L."/>
            <person name="Wilson P."/>
            <person name="Seemann T."/>
            <person name="McGrath A."/>
            <person name="Cullen P.A."/>
            <person name="Davis J."/>
            <person name="Johnson M."/>
            <person name="Kuczek E."/>
            <person name="Alt D.P."/>
            <person name="Peterson-Burch B."/>
            <person name="Coppel R.L."/>
            <person name="Rood J.I."/>
            <person name="Davies J.K."/>
            <person name="Adler B."/>
        </authorList>
    </citation>
    <scope>NUCLEOTIDE SEQUENCE [LARGE SCALE GENOMIC DNA]</scope>
    <source>
        <strain>L550</strain>
    </source>
</reference>
<keyword id="KW-0030">Aminoacyl-tRNA synthetase</keyword>
<keyword id="KW-0067">ATP-binding</keyword>
<keyword id="KW-0963">Cytoplasm</keyword>
<keyword id="KW-0436">Ligase</keyword>
<keyword id="KW-0479">Metal-binding</keyword>
<keyword id="KW-0547">Nucleotide-binding</keyword>
<keyword id="KW-0648">Protein biosynthesis</keyword>
<keyword id="KW-0694">RNA-binding</keyword>
<keyword id="KW-0820">tRNA-binding</keyword>
<keyword id="KW-0862">Zinc</keyword>
<evidence type="ECO:0000255" key="1">
    <source>
        <dbReference type="HAMAP-Rule" id="MF_00184"/>
    </source>
</evidence>
<evidence type="ECO:0000255" key="2">
    <source>
        <dbReference type="PROSITE-ProRule" id="PRU01228"/>
    </source>
</evidence>